<dbReference type="EC" id="1.-.-.-" evidence="1"/>
<dbReference type="EC" id="1.1.98.-" evidence="1"/>
<dbReference type="EMBL" id="AE000516">
    <property type="protein sequence ID" value="AAK48010.1"/>
    <property type="molecule type" value="Genomic_DNA"/>
</dbReference>
<dbReference type="PIR" id="D70677">
    <property type="entry name" value="D70677"/>
</dbReference>
<dbReference type="RefSeq" id="WP_003419309.1">
    <property type="nucleotide sequence ID" value="NZ_KK341227.1"/>
</dbReference>
<dbReference type="SMR" id="P9WP14"/>
<dbReference type="GeneID" id="45427531"/>
<dbReference type="KEGG" id="mtc:MT3651"/>
<dbReference type="PATRIC" id="fig|83331.31.peg.3932"/>
<dbReference type="HOGENOM" id="CLU_114921_1_1_11"/>
<dbReference type="Proteomes" id="UP000001020">
    <property type="component" value="Chromosome"/>
</dbReference>
<dbReference type="GO" id="GO:0005886">
    <property type="term" value="C:plasma membrane"/>
    <property type="evidence" value="ECO:0007669"/>
    <property type="project" value="UniProtKB-SubCell"/>
</dbReference>
<dbReference type="GO" id="GO:0070967">
    <property type="term" value="F:coenzyme F420 binding"/>
    <property type="evidence" value="ECO:0007669"/>
    <property type="project" value="TreeGrafter"/>
</dbReference>
<dbReference type="GO" id="GO:0016491">
    <property type="term" value="F:oxidoreductase activity"/>
    <property type="evidence" value="ECO:0007669"/>
    <property type="project" value="UniProtKB-KW"/>
</dbReference>
<dbReference type="FunFam" id="2.30.110.10:FF:000027">
    <property type="entry name" value="Deazaflavin-dependent nitroreductase ddn"/>
    <property type="match status" value="1"/>
</dbReference>
<dbReference type="Gene3D" id="2.30.110.10">
    <property type="entry name" value="Electron Transport, Fmn-binding Protein, Chain A"/>
    <property type="match status" value="1"/>
</dbReference>
<dbReference type="InterPro" id="IPR004378">
    <property type="entry name" value="F420H2_quin_Rdtase"/>
</dbReference>
<dbReference type="InterPro" id="IPR012349">
    <property type="entry name" value="Split_barrel_FMN-bd"/>
</dbReference>
<dbReference type="NCBIfam" id="TIGR00026">
    <property type="entry name" value="hi_GC_TIGR00026"/>
    <property type="match status" value="1"/>
</dbReference>
<dbReference type="PANTHER" id="PTHR39428:SF3">
    <property type="entry name" value="DEAZAFLAVIN-DEPENDENT NITROREDUCTASE"/>
    <property type="match status" value="1"/>
</dbReference>
<dbReference type="PANTHER" id="PTHR39428">
    <property type="entry name" value="F420H(2)-DEPENDENT QUINONE REDUCTASE RV1261C"/>
    <property type="match status" value="1"/>
</dbReference>
<dbReference type="Pfam" id="PF04075">
    <property type="entry name" value="F420H2_quin_red"/>
    <property type="match status" value="1"/>
</dbReference>
<dbReference type="SUPFAM" id="SSF50475">
    <property type="entry name" value="FMN-binding split barrel"/>
    <property type="match status" value="1"/>
</dbReference>
<name>DDN_MYCTO</name>
<gene>
    <name type="primary">ddn</name>
    <name type="ordered locus">MT3651</name>
</gene>
<evidence type="ECO:0000250" key="1">
    <source>
        <dbReference type="UniProtKB" id="P9WP15"/>
    </source>
</evidence>
<evidence type="ECO:0000305" key="2"/>
<organism>
    <name type="scientific">Mycobacterium tuberculosis (strain CDC 1551 / Oshkosh)</name>
    <dbReference type="NCBI Taxonomy" id="83331"/>
    <lineage>
        <taxon>Bacteria</taxon>
        <taxon>Bacillati</taxon>
        <taxon>Actinomycetota</taxon>
        <taxon>Actinomycetes</taxon>
        <taxon>Mycobacteriales</taxon>
        <taxon>Mycobacteriaceae</taxon>
        <taxon>Mycobacterium</taxon>
        <taxon>Mycobacterium tuberculosis complex</taxon>
    </lineage>
</organism>
<protein>
    <recommendedName>
        <fullName evidence="1">Deazaflavin-dependent nitroreductase</fullName>
        <ecNumber evidence="1">1.-.-.-</ecNumber>
    </recommendedName>
    <alternativeName>
        <fullName evidence="1">F420H(2)-dependent quinone reductase Ddn</fullName>
        <shortName evidence="1">Fqr</shortName>
        <ecNumber evidence="1">1.1.98.-</ecNumber>
    </alternativeName>
</protein>
<accession>P9WP14</accession>
<accession>L0TD35</accession>
<accession>P71854</accession>
<accession>Q7D5B2</accession>
<keyword id="KW-1003">Cell membrane</keyword>
<keyword id="KW-0472">Membrane</keyword>
<keyword id="KW-0560">Oxidoreductase</keyword>
<keyword id="KW-1185">Reference proteome</keyword>
<proteinExistence type="inferred from homology"/>
<sequence length="151" mass="17371">MPKSPPRFLNSPLSDFFIKWMSRINTWMYRRNDGEGLGGTFQKIPVALLTTTGRKTGQPRVNPLYFLRDGGRVIVAASKGGAEKNPMWYLNLKANPKVQVQIKKEVLDLTARDATDEERAEYWPQLVTMYPSYQDYQSWTDRTIPIVVCEP</sequence>
<feature type="chain" id="PRO_0000427031" description="Deazaflavin-dependent nitroreductase">
    <location>
        <begin position="1"/>
        <end position="151"/>
    </location>
</feature>
<feature type="binding site" evidence="1">
    <location>
        <begin position="54"/>
        <end position="56"/>
    </location>
    <ligand>
        <name>coenzyme F420-(gamma-Glu)n</name>
        <dbReference type="ChEBI" id="CHEBI:133980"/>
    </ligand>
</feature>
<feature type="binding site" evidence="1">
    <location>
        <begin position="60"/>
        <end position="65"/>
    </location>
    <ligand>
        <name>coenzyme F420-(gamma-Glu)n</name>
        <dbReference type="ChEBI" id="CHEBI:133980"/>
    </ligand>
</feature>
<feature type="binding site" evidence="1">
    <location>
        <begin position="76"/>
        <end position="79"/>
    </location>
    <ligand>
        <name>coenzyme F420-(gamma-Glu)n</name>
        <dbReference type="ChEBI" id="CHEBI:133980"/>
    </ligand>
</feature>
<feature type="binding site" evidence="1">
    <location>
        <begin position="87"/>
        <end position="91"/>
    </location>
    <ligand>
        <name>coenzyme F420-(gamma-Glu)n</name>
        <dbReference type="ChEBI" id="CHEBI:133980"/>
    </ligand>
</feature>
<feature type="binding site" evidence="1">
    <location>
        <position position="133"/>
    </location>
    <ligand>
        <name>coenzyme F420-(gamma-Glu)n</name>
        <dbReference type="ChEBI" id="CHEBI:133980"/>
    </ligand>
</feature>
<reference key="1">
    <citation type="journal article" date="2002" name="J. Bacteriol.">
        <title>Whole-genome comparison of Mycobacterium tuberculosis clinical and laboratory strains.</title>
        <authorList>
            <person name="Fleischmann R.D."/>
            <person name="Alland D."/>
            <person name="Eisen J.A."/>
            <person name="Carpenter L."/>
            <person name="White O."/>
            <person name="Peterson J.D."/>
            <person name="DeBoy R.T."/>
            <person name="Dodson R.J."/>
            <person name="Gwinn M.L."/>
            <person name="Haft D.H."/>
            <person name="Hickey E.K."/>
            <person name="Kolonay J.F."/>
            <person name="Nelson W.C."/>
            <person name="Umayam L.A."/>
            <person name="Ermolaeva M.D."/>
            <person name="Salzberg S.L."/>
            <person name="Delcher A."/>
            <person name="Utterback T.R."/>
            <person name="Weidman J.F."/>
            <person name="Khouri H.M."/>
            <person name="Gill J."/>
            <person name="Mikula A."/>
            <person name="Bishai W."/>
            <person name="Jacobs W.R. Jr."/>
            <person name="Venter J.C."/>
            <person name="Fraser C.M."/>
        </authorList>
    </citation>
    <scope>NUCLEOTIDE SEQUENCE [LARGE SCALE GENOMIC DNA]</scope>
    <source>
        <strain>CDC 1551 / Oshkosh</strain>
    </source>
</reference>
<comment type="function">
    <text evidence="1">Involved in a F420-dependent anti-oxidant mechanism that protects M.tuberculosis against oxidative stress and bactericidal agents. Catalyzes the F420H(2)-dependent two-electron reduction of quinones to dihydroquinones, thereby preventing the formation of cytotoxic semiquinones obtained by the one-electron reduction pathway. In vitro, catalyzes the reduction of both benzoquinone and naphthoquinone analogs; since menaquinone is the sole quinone electron carrier in the respiratory chain in M.tuberculosis, the physiological electron acceptor for Fqr-mediated F420H(2) oxidation is therefore likely to be the endogenous menaquinone found in the membrane fraction of M.tuberculosis. Is able to use F420 species with two and five glutamate residues in its polyglutamate tail. Cannot use NADH or NADPH instead of F420H(2) as the electron donor.</text>
</comment>
<comment type="function">
    <text evidence="1">Is involved in the bioreductive activation of bicyclic 4-nitroimidazole prodrugs such as PA-824 and delamanid developed for anti-tuberculosis therapy against both replicating and persistent bacteria. It converts PA-824 into three primary metabolites resulting from reduction of the imidazole ring at C-3; the major one is the corresponding des-nitroimidazole that generates lethal reactive nitrogen species, including nitric oxide (NO), which appears to be responsible for the anaerobic killing activity. Ddn uses the reduced F420 produced by FGD1 to activate PA-824. Delamanid (OPC-67683) is also reduced by Ddn to its des-nitro form.</text>
</comment>
<comment type="catalytic activity">
    <reaction evidence="1">
        <text>oxidized coenzyme F420-(gamma-L-Glu)(n) + a quinol + H(+) = reduced coenzyme F420-(gamma-L-Glu)(n) + a quinone</text>
        <dbReference type="Rhea" id="RHEA:39663"/>
        <dbReference type="Rhea" id="RHEA-COMP:12939"/>
        <dbReference type="Rhea" id="RHEA-COMP:14378"/>
        <dbReference type="ChEBI" id="CHEBI:15378"/>
        <dbReference type="ChEBI" id="CHEBI:24646"/>
        <dbReference type="ChEBI" id="CHEBI:132124"/>
        <dbReference type="ChEBI" id="CHEBI:133980"/>
        <dbReference type="ChEBI" id="CHEBI:139511"/>
    </reaction>
</comment>
<comment type="subcellular location">
    <subcellularLocation>
        <location evidence="1">Cell membrane</location>
        <topology evidence="1">Peripheral membrane protein</topology>
    </subcellularLocation>
</comment>
<comment type="similarity">
    <text evidence="2">Belongs to the F420H(2)-dependent quinone reductase family.</text>
</comment>